<organism>
    <name type="scientific">Streptococcus pneumoniae (strain JJA)</name>
    <dbReference type="NCBI Taxonomy" id="488222"/>
    <lineage>
        <taxon>Bacteria</taxon>
        <taxon>Bacillati</taxon>
        <taxon>Bacillota</taxon>
        <taxon>Bacilli</taxon>
        <taxon>Lactobacillales</taxon>
        <taxon>Streptococcaceae</taxon>
        <taxon>Streptococcus</taxon>
    </lineage>
</organism>
<evidence type="ECO:0000255" key="1">
    <source>
        <dbReference type="HAMAP-Rule" id="MF_00091"/>
    </source>
</evidence>
<accession>C1CCB3</accession>
<comment type="function">
    <text evidence="1">Involved in the synthesis of autoinducer 2 (AI-2) which is secreted by bacteria and is used to communicate both the cell density and the metabolic potential of the environment. The regulation of gene expression in response to changes in cell density is called quorum sensing. Catalyzes the transformation of S-ribosylhomocysteine (RHC) to homocysteine (HC) and 4,5-dihydroxy-2,3-pentadione (DPD).</text>
</comment>
<comment type="catalytic activity">
    <reaction evidence="1">
        <text>S-(5-deoxy-D-ribos-5-yl)-L-homocysteine = (S)-4,5-dihydroxypentane-2,3-dione + L-homocysteine</text>
        <dbReference type="Rhea" id="RHEA:17753"/>
        <dbReference type="ChEBI" id="CHEBI:29484"/>
        <dbReference type="ChEBI" id="CHEBI:58195"/>
        <dbReference type="ChEBI" id="CHEBI:58199"/>
        <dbReference type="EC" id="4.4.1.21"/>
    </reaction>
</comment>
<comment type="cofactor">
    <cofactor evidence="1">
        <name>Fe cation</name>
        <dbReference type="ChEBI" id="CHEBI:24875"/>
    </cofactor>
    <text evidence="1">Binds 1 Fe cation per subunit.</text>
</comment>
<comment type="subunit">
    <text evidence="1">Homodimer.</text>
</comment>
<comment type="similarity">
    <text evidence="1">Belongs to the LuxS family.</text>
</comment>
<dbReference type="EC" id="4.4.1.21" evidence="1"/>
<dbReference type="EMBL" id="CP000919">
    <property type="protein sequence ID" value="ACO18800.1"/>
    <property type="molecule type" value="Genomic_DNA"/>
</dbReference>
<dbReference type="RefSeq" id="WP_000032551.1">
    <property type="nucleotide sequence ID" value="NC_012466.1"/>
</dbReference>
<dbReference type="SMR" id="C1CCB3"/>
<dbReference type="KEGG" id="sjj:SPJ_0332"/>
<dbReference type="HOGENOM" id="CLU_107531_2_1_9"/>
<dbReference type="Proteomes" id="UP000002206">
    <property type="component" value="Chromosome"/>
</dbReference>
<dbReference type="GO" id="GO:0005506">
    <property type="term" value="F:iron ion binding"/>
    <property type="evidence" value="ECO:0007669"/>
    <property type="project" value="InterPro"/>
</dbReference>
<dbReference type="GO" id="GO:0043768">
    <property type="term" value="F:S-ribosylhomocysteine lyase activity"/>
    <property type="evidence" value="ECO:0007669"/>
    <property type="project" value="UniProtKB-UniRule"/>
</dbReference>
<dbReference type="GO" id="GO:0009372">
    <property type="term" value="P:quorum sensing"/>
    <property type="evidence" value="ECO:0007669"/>
    <property type="project" value="UniProtKB-UniRule"/>
</dbReference>
<dbReference type="Gene3D" id="3.30.1360.80">
    <property type="entry name" value="S-ribosylhomocysteinase (LuxS)"/>
    <property type="match status" value="1"/>
</dbReference>
<dbReference type="HAMAP" id="MF_00091">
    <property type="entry name" value="LuxS"/>
    <property type="match status" value="1"/>
</dbReference>
<dbReference type="InterPro" id="IPR037005">
    <property type="entry name" value="LuxS_sf"/>
</dbReference>
<dbReference type="InterPro" id="IPR011249">
    <property type="entry name" value="Metalloenz_LuxS/M16"/>
</dbReference>
<dbReference type="InterPro" id="IPR003815">
    <property type="entry name" value="S-ribosylhomocysteinase"/>
</dbReference>
<dbReference type="NCBIfam" id="NF002607">
    <property type="entry name" value="PRK02260.2-5"/>
    <property type="match status" value="1"/>
</dbReference>
<dbReference type="NCBIfam" id="NF002608">
    <property type="entry name" value="PRK02260.3-1"/>
    <property type="match status" value="1"/>
</dbReference>
<dbReference type="PANTHER" id="PTHR35799">
    <property type="entry name" value="S-RIBOSYLHOMOCYSTEINE LYASE"/>
    <property type="match status" value="1"/>
</dbReference>
<dbReference type="PANTHER" id="PTHR35799:SF1">
    <property type="entry name" value="S-RIBOSYLHOMOCYSTEINE LYASE"/>
    <property type="match status" value="1"/>
</dbReference>
<dbReference type="Pfam" id="PF02664">
    <property type="entry name" value="LuxS"/>
    <property type="match status" value="1"/>
</dbReference>
<dbReference type="PIRSF" id="PIRSF006160">
    <property type="entry name" value="AI2"/>
    <property type="match status" value="1"/>
</dbReference>
<dbReference type="PRINTS" id="PR01487">
    <property type="entry name" value="LUXSPROTEIN"/>
</dbReference>
<dbReference type="SUPFAM" id="SSF63411">
    <property type="entry name" value="LuxS/MPP-like metallohydrolase"/>
    <property type="match status" value="1"/>
</dbReference>
<protein>
    <recommendedName>
        <fullName evidence="1">S-ribosylhomocysteine lyase</fullName>
        <ecNumber evidence="1">4.4.1.21</ecNumber>
    </recommendedName>
    <alternativeName>
        <fullName evidence="1">AI-2 synthesis protein</fullName>
    </alternativeName>
    <alternativeName>
        <fullName evidence="1">Autoinducer-2 production protein LuxS</fullName>
    </alternativeName>
</protein>
<proteinExistence type="inferred from homology"/>
<gene>
    <name evidence="1" type="primary">luxS</name>
    <name type="ordered locus">SPJ_0332</name>
</gene>
<sequence>MSKEVIVESFELDHTIVKAPYVRLIGEETGPKGDIISNYDIRLVQPNEDSIPTAGLHTIEHLLAKLIRTRIDGMIDCSPFGCRTGFHMIMWGRHTSAKIAAVIKDSLKEIAETTTWEDVPGTTIESCGNYKDHSLFSAKEWARLILEQGISDDAFERHVI</sequence>
<name>LUXS_STRZJ</name>
<feature type="chain" id="PRO_1000191042" description="S-ribosylhomocysteine lyase">
    <location>
        <begin position="1"/>
        <end position="160"/>
    </location>
</feature>
<feature type="binding site" evidence="1">
    <location>
        <position position="57"/>
    </location>
    <ligand>
        <name>Fe cation</name>
        <dbReference type="ChEBI" id="CHEBI:24875"/>
    </ligand>
</feature>
<feature type="binding site" evidence="1">
    <location>
        <position position="61"/>
    </location>
    <ligand>
        <name>Fe cation</name>
        <dbReference type="ChEBI" id="CHEBI:24875"/>
    </ligand>
</feature>
<feature type="binding site" evidence="1">
    <location>
        <position position="127"/>
    </location>
    <ligand>
        <name>Fe cation</name>
        <dbReference type="ChEBI" id="CHEBI:24875"/>
    </ligand>
</feature>
<keyword id="KW-0071">Autoinducer synthesis</keyword>
<keyword id="KW-0408">Iron</keyword>
<keyword id="KW-0456">Lyase</keyword>
<keyword id="KW-0479">Metal-binding</keyword>
<keyword id="KW-0673">Quorum sensing</keyword>
<reference key="1">
    <citation type="journal article" date="2010" name="Genome Biol.">
        <title>Structure and dynamics of the pan-genome of Streptococcus pneumoniae and closely related species.</title>
        <authorList>
            <person name="Donati C."/>
            <person name="Hiller N.L."/>
            <person name="Tettelin H."/>
            <person name="Muzzi A."/>
            <person name="Croucher N.J."/>
            <person name="Angiuoli S.V."/>
            <person name="Oggioni M."/>
            <person name="Dunning Hotopp J.C."/>
            <person name="Hu F.Z."/>
            <person name="Riley D.R."/>
            <person name="Covacci A."/>
            <person name="Mitchell T.J."/>
            <person name="Bentley S.D."/>
            <person name="Kilian M."/>
            <person name="Ehrlich G.D."/>
            <person name="Rappuoli R."/>
            <person name="Moxon E.R."/>
            <person name="Masignani V."/>
        </authorList>
    </citation>
    <scope>NUCLEOTIDE SEQUENCE [LARGE SCALE GENOMIC DNA]</scope>
    <source>
        <strain>JJA</strain>
    </source>
</reference>